<feature type="signal peptide" evidence="1">
    <location>
        <begin position="1"/>
        <end position="22"/>
    </location>
</feature>
<feature type="chain" id="PRO_0000041713" description="Zona pellucida sperm-binding protein 3">
    <location>
        <begin position="23"/>
        <end position="349"/>
    </location>
</feature>
<feature type="chain" id="PRO_0000304571" description="Processed zona pellucida sperm-binding protein 3">
    <location>
        <begin position="23"/>
        <end status="unknown"/>
    </location>
</feature>
<feature type="propeptide" id="PRO_0000041714" description="Removed in mature form" evidence="1">
    <location>
        <begin position="350"/>
        <end position="422"/>
    </location>
</feature>
<feature type="topological domain" description="Extracellular" evidence="5">
    <location>
        <begin position="23"/>
        <end position="386"/>
    </location>
</feature>
<feature type="transmembrane region" description="Helical" evidence="5">
    <location>
        <begin position="387"/>
        <end position="407"/>
    </location>
</feature>
<feature type="topological domain" description="Cytoplasmic" evidence="5">
    <location>
        <begin position="408"/>
        <end position="422"/>
    </location>
</feature>
<feature type="domain" description="ZP" evidence="6">
    <location>
        <begin position="45"/>
        <end position="306"/>
    </location>
</feature>
<feature type="modified residue" description="Pyrrolidone carboxylic acid" evidence="3">
    <location>
        <position position="23"/>
    </location>
</feature>
<feature type="glycosylation site" description="O-linked (GalNAc...) threonine" evidence="1">
    <location>
        <position position="32"/>
    </location>
</feature>
<feature type="glycosylation site" description="O-linked (GalNAc...) threonine" evidence="1">
    <location>
        <position position="34"/>
    </location>
</feature>
<feature type="glycosylation site" description="N-linked (GlcNAc...) asparagine" evidence="1">
    <location>
        <position position="146"/>
    </location>
</feature>
<feature type="glycosylation site" description="O-linked (GalNAc...) threonine" evidence="1">
    <location>
        <position position="155"/>
    </location>
</feature>
<feature type="glycosylation site" description="O-linked (GalNAc...) threonine" evidence="1">
    <location>
        <position position="161"/>
    </location>
</feature>
<feature type="glycosylation site" description="O-linked (GalNAc...) threonine" evidence="1">
    <location>
        <position position="162"/>
    </location>
</feature>
<feature type="glycosylation site" description="N-linked (GlcNAc...) asparagine" evidence="1">
    <location>
        <position position="271"/>
    </location>
</feature>
<feature type="glycosylation site" description="N-linked (GlcNAc...) asparagine" evidence="1">
    <location>
        <position position="302"/>
    </location>
</feature>
<feature type="disulfide bond" evidence="1">
    <location>
        <begin position="46"/>
        <end position="139"/>
    </location>
</feature>
<feature type="disulfide bond" evidence="1">
    <location>
        <begin position="78"/>
        <end position="98"/>
    </location>
</feature>
<feature type="disulfide bond" evidence="1">
    <location>
        <begin position="216"/>
        <end position="281"/>
    </location>
</feature>
<feature type="disulfide bond" evidence="1">
    <location>
        <begin position="238"/>
        <end position="299"/>
    </location>
</feature>
<reference key="1">
    <citation type="journal article" date="1990" name="Dev. Biol.">
        <title>Genomic organization and polypeptide primary structure of zona pellucida glycoprotein hZP3, the hamster sperm receptor.</title>
        <authorList>
            <person name="Kinloch R.A."/>
            <person name="Ruiz-Seller B."/>
            <person name="Wassarman P.M."/>
        </authorList>
    </citation>
    <scope>NUCLEOTIDE SEQUENCE [MRNA]</scope>
    <source>
        <tissue>Ovary</tissue>
    </source>
</reference>
<proteinExistence type="evidence at transcript level"/>
<name>ZP3_MESAU</name>
<protein>
    <recommendedName>
        <fullName>Zona pellucida sperm-binding protein 3</fullName>
    </recommendedName>
    <alternativeName>
        <fullName>Sperm receptor</fullName>
    </alternativeName>
    <alternativeName>
        <fullName>Zona pellucida glycoprotein 3</fullName>
        <shortName>Zp-3</shortName>
    </alternativeName>
    <alternativeName>
        <fullName>Zona pellucida protein C</fullName>
    </alternativeName>
    <component>
        <recommendedName>
            <fullName>Processed zona pellucida sperm-binding protein 3</fullName>
        </recommendedName>
    </component>
</protein>
<organism>
    <name type="scientific">Mesocricetus auratus</name>
    <name type="common">Golden hamster</name>
    <dbReference type="NCBI Taxonomy" id="10036"/>
    <lineage>
        <taxon>Eukaryota</taxon>
        <taxon>Metazoa</taxon>
        <taxon>Chordata</taxon>
        <taxon>Craniata</taxon>
        <taxon>Vertebrata</taxon>
        <taxon>Euteleostomi</taxon>
        <taxon>Mammalia</taxon>
        <taxon>Eutheria</taxon>
        <taxon>Euarchontoglires</taxon>
        <taxon>Glires</taxon>
        <taxon>Rodentia</taxon>
        <taxon>Myomorpha</taxon>
        <taxon>Muroidea</taxon>
        <taxon>Cricetidae</taxon>
        <taxon>Cricetinae</taxon>
        <taxon>Mesocricetus</taxon>
    </lineage>
</organism>
<keyword id="KW-1003">Cell membrane</keyword>
<keyword id="KW-0165">Cleavage on pair of basic residues</keyword>
<keyword id="KW-1015">Disulfide bond</keyword>
<keyword id="KW-0272">Extracellular matrix</keyword>
<keyword id="KW-0278">Fertilization</keyword>
<keyword id="KW-0325">Glycoprotein</keyword>
<keyword id="KW-0472">Membrane</keyword>
<keyword id="KW-0873">Pyrrolidone carboxylic acid</keyword>
<keyword id="KW-0675">Receptor</keyword>
<keyword id="KW-1185">Reference proteome</keyword>
<keyword id="KW-0964">Secreted</keyword>
<keyword id="KW-0732">Signal</keyword>
<keyword id="KW-0812">Transmembrane</keyword>
<keyword id="KW-1133">Transmembrane helix</keyword>
<gene>
    <name type="primary">ZP3</name>
    <name type="synonym">ZPC</name>
</gene>
<dbReference type="EMBL" id="M63629">
    <property type="protein sequence ID" value="AAA37079.1"/>
    <property type="molecule type" value="mRNA"/>
</dbReference>
<dbReference type="PIR" id="A60503">
    <property type="entry name" value="A60503"/>
</dbReference>
<dbReference type="RefSeq" id="NP_001268531.1">
    <property type="nucleotide sequence ID" value="NM_001281602.1"/>
</dbReference>
<dbReference type="SMR" id="P23491"/>
<dbReference type="STRING" id="10036.ENSMAUP00000023621"/>
<dbReference type="GlyCosmos" id="P23491">
    <property type="glycosylation" value="8 sites, No reported glycans"/>
</dbReference>
<dbReference type="GeneID" id="101824371"/>
<dbReference type="KEGG" id="maua:101824371"/>
<dbReference type="CTD" id="7784"/>
<dbReference type="eggNOG" id="ENOG502QSZF">
    <property type="taxonomic scope" value="Eukaryota"/>
</dbReference>
<dbReference type="OrthoDB" id="8880842at2759"/>
<dbReference type="Proteomes" id="UP000189706">
    <property type="component" value="Unplaced"/>
</dbReference>
<dbReference type="GO" id="GO:0062023">
    <property type="term" value="C:collagen-containing extracellular matrix"/>
    <property type="evidence" value="ECO:0000250"/>
    <property type="project" value="UniProtKB"/>
</dbReference>
<dbReference type="GO" id="GO:0035805">
    <property type="term" value="C:egg coat"/>
    <property type="evidence" value="ECO:0000250"/>
    <property type="project" value="UniProtKB"/>
</dbReference>
<dbReference type="GO" id="GO:0005615">
    <property type="term" value="C:extracellular space"/>
    <property type="evidence" value="ECO:0000250"/>
    <property type="project" value="UniProtKB"/>
</dbReference>
<dbReference type="GO" id="GO:0005886">
    <property type="term" value="C:plasma membrane"/>
    <property type="evidence" value="ECO:0000250"/>
    <property type="project" value="UniProtKB"/>
</dbReference>
<dbReference type="GO" id="GO:0032190">
    <property type="term" value="F:acrosin binding"/>
    <property type="evidence" value="ECO:0007669"/>
    <property type="project" value="TreeGrafter"/>
</dbReference>
<dbReference type="GO" id="GO:0030246">
    <property type="term" value="F:carbohydrate binding"/>
    <property type="evidence" value="ECO:0000250"/>
    <property type="project" value="UniProtKB"/>
</dbReference>
<dbReference type="GO" id="GO:0048018">
    <property type="term" value="F:receptor ligand activity"/>
    <property type="evidence" value="ECO:0000250"/>
    <property type="project" value="UniProtKB"/>
</dbReference>
<dbReference type="GO" id="GO:0035804">
    <property type="term" value="F:structural constituent of egg coat"/>
    <property type="evidence" value="ECO:0000250"/>
    <property type="project" value="UniProtKB"/>
</dbReference>
<dbReference type="GO" id="GO:0007339">
    <property type="term" value="P:binding of sperm to zona pellucida"/>
    <property type="evidence" value="ECO:0000250"/>
    <property type="project" value="UniProtKB"/>
</dbReference>
<dbReference type="GO" id="GO:0001825">
    <property type="term" value="P:blastocyst formation"/>
    <property type="evidence" value="ECO:0000250"/>
    <property type="project" value="UniProtKB"/>
</dbReference>
<dbReference type="GO" id="GO:0035803">
    <property type="term" value="P:egg coat formation"/>
    <property type="evidence" value="ECO:0000250"/>
    <property type="project" value="UniProtKB"/>
</dbReference>
<dbReference type="GO" id="GO:0002455">
    <property type="term" value="P:humoral immune response mediated by circulating immunoglobulin"/>
    <property type="evidence" value="ECO:0000250"/>
    <property type="project" value="UniProtKB"/>
</dbReference>
<dbReference type="GO" id="GO:2000360">
    <property type="term" value="P:negative regulation of binding of sperm to zona pellucida"/>
    <property type="evidence" value="ECO:0000250"/>
    <property type="project" value="UniProtKB"/>
</dbReference>
<dbReference type="GO" id="GO:0045892">
    <property type="term" value="P:negative regulation of DNA-templated transcription"/>
    <property type="evidence" value="ECO:0000250"/>
    <property type="project" value="UniProtKB"/>
</dbReference>
<dbReference type="GO" id="GO:0048599">
    <property type="term" value="P:oocyte development"/>
    <property type="evidence" value="ECO:0000250"/>
    <property type="project" value="UniProtKB"/>
</dbReference>
<dbReference type="GO" id="GO:2000368">
    <property type="term" value="P:positive regulation of acrosomal vesicle exocytosis"/>
    <property type="evidence" value="ECO:0000250"/>
    <property type="project" value="UniProtKB"/>
</dbReference>
<dbReference type="GO" id="GO:2000344">
    <property type="term" value="P:positive regulation of acrosome reaction"/>
    <property type="evidence" value="ECO:0000250"/>
    <property type="project" value="UniProtKB"/>
</dbReference>
<dbReference type="GO" id="GO:2000388">
    <property type="term" value="P:positive regulation of antral ovarian follicle growth"/>
    <property type="evidence" value="ECO:0000250"/>
    <property type="project" value="UniProtKB"/>
</dbReference>
<dbReference type="GO" id="GO:0045893">
    <property type="term" value="P:positive regulation of DNA-templated transcription"/>
    <property type="evidence" value="ECO:0000250"/>
    <property type="project" value="UniProtKB"/>
</dbReference>
<dbReference type="GO" id="GO:0002922">
    <property type="term" value="P:positive regulation of humoral immune response"/>
    <property type="evidence" value="ECO:0000250"/>
    <property type="project" value="UniProtKB"/>
</dbReference>
<dbReference type="GO" id="GO:0050729">
    <property type="term" value="P:positive regulation of inflammatory response"/>
    <property type="evidence" value="ECO:0000250"/>
    <property type="project" value="UniProtKB"/>
</dbReference>
<dbReference type="GO" id="GO:0032753">
    <property type="term" value="P:positive regulation of interleukin-4 production"/>
    <property type="evidence" value="ECO:0000250"/>
    <property type="project" value="UniProtKB"/>
</dbReference>
<dbReference type="GO" id="GO:0002687">
    <property type="term" value="P:positive regulation of leukocyte migration"/>
    <property type="evidence" value="ECO:0000250"/>
    <property type="project" value="UniProtKB"/>
</dbReference>
<dbReference type="GO" id="GO:2000386">
    <property type="term" value="P:positive regulation of ovarian follicle development"/>
    <property type="evidence" value="ECO:0000250"/>
    <property type="project" value="UniProtKB"/>
</dbReference>
<dbReference type="GO" id="GO:0042102">
    <property type="term" value="P:positive regulation of T cell proliferation"/>
    <property type="evidence" value="ECO:0000250"/>
    <property type="project" value="UniProtKB"/>
</dbReference>
<dbReference type="GO" id="GO:0032729">
    <property type="term" value="P:positive regulation of type II interferon production"/>
    <property type="evidence" value="ECO:0000250"/>
    <property type="project" value="UniProtKB"/>
</dbReference>
<dbReference type="GO" id="GO:0001809">
    <property type="term" value="P:positive regulation of type IV hypersensitivity"/>
    <property type="evidence" value="ECO:0000250"/>
    <property type="project" value="UniProtKB"/>
</dbReference>
<dbReference type="FunFam" id="2.60.40.3210:FF:000001">
    <property type="entry name" value="Zona pellucida sperm-binding protein 3"/>
    <property type="match status" value="1"/>
</dbReference>
<dbReference type="FunFam" id="2.60.40.4100:FF:000002">
    <property type="entry name" value="Zona pellucida sperm-binding protein 3"/>
    <property type="match status" value="1"/>
</dbReference>
<dbReference type="Gene3D" id="2.60.40.4100">
    <property type="entry name" value="Zona pellucida, ZP-C domain"/>
    <property type="match status" value="1"/>
</dbReference>
<dbReference type="Gene3D" id="2.60.40.3210">
    <property type="entry name" value="Zona pellucida, ZP-N domain"/>
    <property type="match status" value="1"/>
</dbReference>
<dbReference type="InterPro" id="IPR055355">
    <property type="entry name" value="ZP-C"/>
</dbReference>
<dbReference type="InterPro" id="IPR042235">
    <property type="entry name" value="ZP-C_dom"/>
</dbReference>
<dbReference type="InterPro" id="IPR055356">
    <property type="entry name" value="ZP-N"/>
</dbReference>
<dbReference type="InterPro" id="IPR048290">
    <property type="entry name" value="ZP_chr"/>
</dbReference>
<dbReference type="InterPro" id="IPR001507">
    <property type="entry name" value="ZP_dom"/>
</dbReference>
<dbReference type="InterPro" id="IPR017977">
    <property type="entry name" value="ZP_dom_CS"/>
</dbReference>
<dbReference type="PANTHER" id="PTHR11576">
    <property type="entry name" value="ZONA PELLUCIDA SPERM-BINDING PROTEIN 3"/>
    <property type="match status" value="1"/>
</dbReference>
<dbReference type="PANTHER" id="PTHR11576:SF2">
    <property type="entry name" value="ZONA PELLUCIDA SPERM-BINDING PROTEIN 3"/>
    <property type="match status" value="1"/>
</dbReference>
<dbReference type="Pfam" id="PF00100">
    <property type="entry name" value="Zona_pellucida"/>
    <property type="match status" value="1"/>
</dbReference>
<dbReference type="Pfam" id="PF23344">
    <property type="entry name" value="ZP-N"/>
    <property type="match status" value="1"/>
</dbReference>
<dbReference type="PRINTS" id="PR00023">
    <property type="entry name" value="ZPELLUCIDA"/>
</dbReference>
<dbReference type="SMART" id="SM00241">
    <property type="entry name" value="ZP"/>
    <property type="match status" value="1"/>
</dbReference>
<dbReference type="PROSITE" id="PS00682">
    <property type="entry name" value="ZP_1"/>
    <property type="match status" value="1"/>
</dbReference>
<dbReference type="PROSITE" id="PS51034">
    <property type="entry name" value="ZP_2"/>
    <property type="match status" value="1"/>
</dbReference>
<comment type="function">
    <text>Component of the zona pellucida, an extracellular matrix surrounding oocytes which mediates sperm binding, induction of the acrosome reaction and prevents post-fertilization polyspermy. The zona pellucida is composed of 3 to 4 glycoproteins, ZP1, ZP2, ZP3, and ZP4. ZP3 is essential for sperm binding and zona matrix formation.</text>
</comment>
<comment type="subunit">
    <text evidence="2 3">Polymers of ZP2 and ZP3 organized into long filaments cross-linked by ZP1 homodimers. Interacts with ZP1 and ZP2.</text>
</comment>
<comment type="subcellular location">
    <molecule>Processed zona pellucida sperm-binding protein 3</molecule>
    <subcellularLocation>
        <location evidence="3">Zona pellucida</location>
    </subcellularLocation>
</comment>
<comment type="subcellular location">
    <subcellularLocation>
        <location evidence="4">Cell membrane</location>
        <topology evidence="5">Single-pass type I membrane protein</topology>
    </subcellularLocation>
</comment>
<comment type="tissue specificity">
    <text>Expressed in oocytes.</text>
</comment>
<comment type="developmental stage">
    <text>Expressed in growing oocytes.</text>
</comment>
<comment type="domain">
    <text>The ZP domain is involved in the polymerization of the ZP proteins to form the zona pellucida.</text>
</comment>
<comment type="PTM">
    <text>Proteolytically cleaved before the transmembrane segment to yield the secreted ectodomain incorporated in the zona pellucida.</text>
</comment>
<comment type="PTM">
    <text evidence="1">N-glycosylated.</text>
</comment>
<comment type="PTM">
    <text evidence="1">O-glycosylated; removal of O-linked glycans may play an important role in the post-fertilization block to polyspermy.</text>
</comment>
<comment type="similarity">
    <text evidence="7">Belongs to the ZP domain family. ZPC subfamily.</text>
</comment>
<comment type="online information" name="Protein Spotlight">
    <link uri="https://www.proteinspotlight.org/back_issues/093"/>
    <text>Molecular chastity - Issue 93 of April 2008</text>
</comment>
<evidence type="ECO:0000250" key="1"/>
<evidence type="ECO:0000250" key="2">
    <source>
        <dbReference type="UniProtKB" id="P20239"/>
    </source>
</evidence>
<evidence type="ECO:0000250" key="3">
    <source>
        <dbReference type="UniProtKB" id="P21754"/>
    </source>
</evidence>
<evidence type="ECO:0000250" key="4">
    <source>
        <dbReference type="UniProtKB" id="P48833"/>
    </source>
</evidence>
<evidence type="ECO:0000255" key="5"/>
<evidence type="ECO:0000255" key="6">
    <source>
        <dbReference type="PROSITE-ProRule" id="PRU00375"/>
    </source>
</evidence>
<evidence type="ECO:0000305" key="7"/>
<accession>P23491</accession>
<sequence>MGLSYQLLLCLLLCGGAKQCCSQPLWLLPGGTPTPGKLTSSVEVECLEAELVVTVSRDLFGTGKLIQPEDLTLGSENCRPLVSVATDVVRFKAQLHECSNRVQVTEDALVYSTVLLHQPRPVPGLSILRTNRADVPIECRYPRQGNVSSHAIRPTWVPFSTTVSSEEKLVFSLRLMEENWNTEKLSPTSHLGEVAYLQAEVQTGSHLPLLLFVDRCVPTPSPDQTASPYHVIVDFHGCLVDGLSESFSAFQVPRPRPETLQFTVDVFHFANSSRNTIYITCHLKVTPANQTPDELNKACSFNRSSKSWSPVEGDAEVCGCCSSGDCGSSSRSRYQAHGVSQWPKSASRRRRHVRDEADVTVGPLIFLGKASDQAVEGWASSAQTSLALGLGLAAVAFLTLAAIVLGVTRSCHTPSHVVSLSQ</sequence>